<sequence>MVKLVVGIGNPGRQYVWTRHNIGFLFLDMLASRFSGAFREAPRLFSSFMKVETSCGVIVLIKPSTYVNLTGKAVLAAKRFFGVSVEGILIVADDINREFGSIRFRQDCGAGGHNGLKNTTQVLQSNHYWQLRLGVGRPSNPESEGVADYVLSNFSFNERKSLNGFFEKGIEEISPWLGF</sequence>
<accession>P49607</accession>
<dbReference type="EC" id="3.1.1.29" evidence="1"/>
<dbReference type="EMBL" id="U31570">
    <property type="protein sequence ID" value="AAB06184.1"/>
    <property type="molecule type" value="Genomic_DNA"/>
</dbReference>
<dbReference type="EMBL" id="AE002160">
    <property type="protein sequence ID" value="AAF39057.1"/>
    <property type="molecule type" value="Genomic_DNA"/>
</dbReference>
<dbReference type="EMBL" id="M62820">
    <property type="protein sequence ID" value="AAA23133.1"/>
    <property type="molecule type" value="Genomic_DNA"/>
</dbReference>
<dbReference type="PIR" id="C37840">
    <property type="entry name" value="C37840"/>
</dbReference>
<dbReference type="PIR" id="C81732">
    <property type="entry name" value="C81732"/>
</dbReference>
<dbReference type="RefSeq" id="WP_010229742.1">
    <property type="nucleotide sequence ID" value="NZ_CP063055.1"/>
</dbReference>
<dbReference type="SMR" id="P49607"/>
<dbReference type="GeneID" id="1246309"/>
<dbReference type="KEGG" id="cmu:TC_0183"/>
<dbReference type="eggNOG" id="COG0193">
    <property type="taxonomic scope" value="Bacteria"/>
</dbReference>
<dbReference type="HOGENOM" id="CLU_062456_3_1_0"/>
<dbReference type="OrthoDB" id="9800507at2"/>
<dbReference type="Proteomes" id="UP000000800">
    <property type="component" value="Chromosome"/>
</dbReference>
<dbReference type="GO" id="GO:0005737">
    <property type="term" value="C:cytoplasm"/>
    <property type="evidence" value="ECO:0007669"/>
    <property type="project" value="UniProtKB-SubCell"/>
</dbReference>
<dbReference type="GO" id="GO:0004045">
    <property type="term" value="F:peptidyl-tRNA hydrolase activity"/>
    <property type="evidence" value="ECO:0007669"/>
    <property type="project" value="UniProtKB-UniRule"/>
</dbReference>
<dbReference type="GO" id="GO:0000049">
    <property type="term" value="F:tRNA binding"/>
    <property type="evidence" value="ECO:0007669"/>
    <property type="project" value="UniProtKB-UniRule"/>
</dbReference>
<dbReference type="GO" id="GO:0006515">
    <property type="term" value="P:protein quality control for misfolded or incompletely synthesized proteins"/>
    <property type="evidence" value="ECO:0007669"/>
    <property type="project" value="UniProtKB-UniRule"/>
</dbReference>
<dbReference type="GO" id="GO:0072344">
    <property type="term" value="P:rescue of stalled ribosome"/>
    <property type="evidence" value="ECO:0007669"/>
    <property type="project" value="UniProtKB-UniRule"/>
</dbReference>
<dbReference type="CDD" id="cd00462">
    <property type="entry name" value="PTH"/>
    <property type="match status" value="1"/>
</dbReference>
<dbReference type="Gene3D" id="3.40.50.1470">
    <property type="entry name" value="Peptidyl-tRNA hydrolase"/>
    <property type="match status" value="1"/>
</dbReference>
<dbReference type="HAMAP" id="MF_00083">
    <property type="entry name" value="Pept_tRNA_hydro_bact"/>
    <property type="match status" value="1"/>
</dbReference>
<dbReference type="InterPro" id="IPR001328">
    <property type="entry name" value="Pept_tRNA_hydro"/>
</dbReference>
<dbReference type="InterPro" id="IPR018171">
    <property type="entry name" value="Pept_tRNA_hydro_CS"/>
</dbReference>
<dbReference type="InterPro" id="IPR036416">
    <property type="entry name" value="Pept_tRNA_hydro_sf"/>
</dbReference>
<dbReference type="NCBIfam" id="TIGR00447">
    <property type="entry name" value="pth"/>
    <property type="match status" value="1"/>
</dbReference>
<dbReference type="PANTHER" id="PTHR17224">
    <property type="entry name" value="PEPTIDYL-TRNA HYDROLASE"/>
    <property type="match status" value="1"/>
</dbReference>
<dbReference type="PANTHER" id="PTHR17224:SF1">
    <property type="entry name" value="PEPTIDYL-TRNA HYDROLASE"/>
    <property type="match status" value="1"/>
</dbReference>
<dbReference type="Pfam" id="PF01195">
    <property type="entry name" value="Pept_tRNA_hydro"/>
    <property type="match status" value="1"/>
</dbReference>
<dbReference type="SUPFAM" id="SSF53178">
    <property type="entry name" value="Peptidyl-tRNA hydrolase-like"/>
    <property type="match status" value="1"/>
</dbReference>
<dbReference type="PROSITE" id="PS01195">
    <property type="entry name" value="PEPT_TRNA_HYDROL_1"/>
    <property type="match status" value="1"/>
</dbReference>
<dbReference type="PROSITE" id="PS01196">
    <property type="entry name" value="PEPT_TRNA_HYDROL_2"/>
    <property type="match status" value="1"/>
</dbReference>
<feature type="chain" id="PRO_0000187717" description="Peptidyl-tRNA hydrolase">
    <location>
        <begin position="1"/>
        <end position="179"/>
    </location>
</feature>
<feature type="active site" description="Proton acceptor" evidence="1">
    <location>
        <position position="20"/>
    </location>
</feature>
<feature type="binding site" evidence="1">
    <location>
        <position position="15"/>
    </location>
    <ligand>
        <name>tRNA</name>
        <dbReference type="ChEBI" id="CHEBI:17843"/>
    </ligand>
</feature>
<feature type="binding site" evidence="1">
    <location>
        <position position="66"/>
    </location>
    <ligand>
        <name>tRNA</name>
        <dbReference type="ChEBI" id="CHEBI:17843"/>
    </ligand>
</feature>
<feature type="binding site" evidence="1">
    <location>
        <position position="68"/>
    </location>
    <ligand>
        <name>tRNA</name>
        <dbReference type="ChEBI" id="CHEBI:17843"/>
    </ligand>
</feature>
<feature type="binding site" evidence="1">
    <location>
        <position position="114"/>
    </location>
    <ligand>
        <name>tRNA</name>
        <dbReference type="ChEBI" id="CHEBI:17843"/>
    </ligand>
</feature>
<feature type="site" description="Discriminates between blocked and unblocked aminoacyl-tRNA" evidence="1">
    <location>
        <position position="10"/>
    </location>
</feature>
<feature type="site" description="Stabilizes the basic form of H active site to accept a proton" evidence="1">
    <location>
        <position position="93"/>
    </location>
</feature>
<feature type="sequence conflict" description="In Ref. 1; AAB06184 and 3; AAA23133." evidence="2" ref="1 3">
    <original>V</original>
    <variation>G</variation>
    <location>
        <position position="146"/>
    </location>
</feature>
<feature type="sequence conflict" description="In Ref. 1; AAB06184 and 3; AAA23133." evidence="2" ref="1 3">
    <original>S</original>
    <variation>G</variation>
    <location>
        <position position="161"/>
    </location>
</feature>
<feature type="sequence conflict" description="In Ref. 1; AAB06184 and 3; AAA23133." evidence="2" ref="1 3">
    <original>GF</original>
    <variation>AFNLKGIYCSLFEKKSS</variation>
    <location>
        <begin position="178"/>
        <end position="179"/>
    </location>
</feature>
<protein>
    <recommendedName>
        <fullName evidence="1">Peptidyl-tRNA hydrolase</fullName>
        <shortName evidence="1">Pth</shortName>
        <ecNumber evidence="1">3.1.1.29</ecNumber>
    </recommendedName>
</protein>
<proteinExistence type="inferred from homology"/>
<comment type="function">
    <text evidence="1">Hydrolyzes ribosome-free peptidyl-tRNAs (with 1 or more amino acids incorporated), which drop off the ribosome during protein synthesis, or as a result of ribosome stalling.</text>
</comment>
<comment type="function">
    <text evidence="1">Catalyzes the release of premature peptidyl moieties from peptidyl-tRNA molecules trapped in stalled 50S ribosomal subunits, and thus maintains levels of free tRNAs and 50S ribosomes.</text>
</comment>
<comment type="catalytic activity">
    <reaction evidence="1">
        <text>an N-acyl-L-alpha-aminoacyl-tRNA + H2O = an N-acyl-L-amino acid + a tRNA + H(+)</text>
        <dbReference type="Rhea" id="RHEA:54448"/>
        <dbReference type="Rhea" id="RHEA-COMP:10123"/>
        <dbReference type="Rhea" id="RHEA-COMP:13883"/>
        <dbReference type="ChEBI" id="CHEBI:15377"/>
        <dbReference type="ChEBI" id="CHEBI:15378"/>
        <dbReference type="ChEBI" id="CHEBI:59874"/>
        <dbReference type="ChEBI" id="CHEBI:78442"/>
        <dbReference type="ChEBI" id="CHEBI:138191"/>
        <dbReference type="EC" id="3.1.1.29"/>
    </reaction>
</comment>
<comment type="subunit">
    <text evidence="1">Monomer.</text>
</comment>
<comment type="subcellular location">
    <subcellularLocation>
        <location evidence="1">Cytoplasm</location>
    </subcellularLocation>
</comment>
<comment type="similarity">
    <text evidence="1">Belongs to the PTH family.</text>
</comment>
<gene>
    <name evidence="1" type="primary">pth</name>
    <name type="ordered locus">TC_0183</name>
</gene>
<keyword id="KW-0963">Cytoplasm</keyword>
<keyword id="KW-0378">Hydrolase</keyword>
<keyword id="KW-0694">RNA-binding</keyword>
<keyword id="KW-0820">tRNA-binding</keyword>
<organism>
    <name type="scientific">Chlamydia muridarum (strain MoPn / Nigg)</name>
    <dbReference type="NCBI Taxonomy" id="243161"/>
    <lineage>
        <taxon>Bacteria</taxon>
        <taxon>Pseudomonadati</taxon>
        <taxon>Chlamydiota</taxon>
        <taxon>Chlamydiia</taxon>
        <taxon>Chlamydiales</taxon>
        <taxon>Chlamydiaceae</taxon>
        <taxon>Chlamydia/Chlamydophila group</taxon>
        <taxon>Chlamydia</taxon>
    </lineage>
</organism>
<evidence type="ECO:0000255" key="1">
    <source>
        <dbReference type="HAMAP-Rule" id="MF_00083"/>
    </source>
</evidence>
<evidence type="ECO:0000305" key="2"/>
<evidence type="ECO:0000312" key="3">
    <source>
        <dbReference type="EMBL" id="AAA23133.1"/>
    </source>
</evidence>
<evidence type="ECO:0000312" key="4">
    <source>
        <dbReference type="EMBL" id="AAB06184.1"/>
    </source>
</evidence>
<evidence type="ECO:0000312" key="5">
    <source>
        <dbReference type="EMBL" id="AAF39057.1"/>
    </source>
</evidence>
<name>PTH_CHLMU</name>
<reference evidence="4" key="1">
    <citation type="journal article" date="1996" name="Gene">
        <title>Microbial genes homologous to the peptidyl-tRNA hydrolase-encoding gene of Escherichia coli.</title>
        <authorList>
            <person name="de la Vega F.M."/>
            <person name="Galindo J.M."/>
            <person name="Old I.G."/>
            <person name="Guarneros G."/>
        </authorList>
    </citation>
    <scope>NUCLEOTIDE SEQUENCE [GENOMIC DNA]</scope>
    <source>
        <strain>MoPn</strain>
    </source>
</reference>
<reference evidence="5" key="2">
    <citation type="journal article" date="2000" name="Nucleic Acids Res.">
        <title>Genome sequences of Chlamydia trachomatis MoPn and Chlamydia pneumoniae AR39.</title>
        <authorList>
            <person name="Read T.D."/>
            <person name="Brunham R.C."/>
            <person name="Shen C."/>
            <person name="Gill S.R."/>
            <person name="Heidelberg J.F."/>
            <person name="White O."/>
            <person name="Hickey E.K."/>
            <person name="Peterson J.D."/>
            <person name="Utterback T.R."/>
            <person name="Berry K.J."/>
            <person name="Bass S."/>
            <person name="Linher K.D."/>
            <person name="Weidman J.F."/>
            <person name="Khouri H.M."/>
            <person name="Craven B."/>
            <person name="Bowman C."/>
            <person name="Dodson R.J."/>
            <person name="Gwinn M.L."/>
            <person name="Nelson W.C."/>
            <person name="DeBoy R.T."/>
            <person name="Kolonay J.F."/>
            <person name="McClarty G."/>
            <person name="Salzberg S.L."/>
            <person name="Eisen J.A."/>
            <person name="Fraser C.M."/>
        </authorList>
    </citation>
    <scope>NUCLEOTIDE SEQUENCE [LARGE SCALE GENOMIC DNA]</scope>
    <source>
        <strain>MoPn / Nigg</strain>
    </source>
</reference>
<reference evidence="3" key="3">
    <citation type="journal article" date="1990" name="J. Bacteriol.">
        <title>Heat shock response of murine Chlamydia trachomatis.</title>
        <authorList>
            <person name="Engel J.N."/>
            <person name="Pollack J."/>
            <person name="Perara E."/>
            <person name="Ganem D."/>
        </authorList>
    </citation>
    <scope>NUCLEOTIDE SEQUENCE [GENOMIC DNA] OF 27-179</scope>
    <source>
        <strain>MoPn</strain>
    </source>
</reference>